<gene>
    <name evidence="1" type="primary">betA</name>
    <name type="ordered locus">Smed_0562</name>
</gene>
<sequence length="549" mass="61179">MQADFVIIGSGSAGSALAYRLSEDGANSVVVLEFGGSDVGPFIQMPAALAWPMSMNRYNWGYLSEPEPNLNNRRITAPRGKVIGGSSSINGMVYVRGHSEDFDRWEELGAKGWAYADVLPYYKRMEHSHGGEEGWRGTDGPLHVQRGPVKNPLFHAFIEAGKQAGFEVTEDYNGSKQEGFGLMEQTTWRGRRWSAASAYLRPALKRPNVELVRCFARKIVIENGRATGVEIERGGRTEVVRANREVIVSASSFNSPKLLMLSGIGPAAHLQEMGIDVKADRPGVGQNLQDHMEFYFQQVSTKPVSLYSWLPWFWQGVAGAQWLFFKRGLGISNQFESCAFLRSAPGVKQPDIQYHFLPVAISYDGKAAAKSHGFQVHVGYNLSKSRGDVTLRSSDPKADPVIRFNYMSHPEDWEKFRHCVRLTREIFGQKAFDLYRGPEIQPGEKVRTDEEIDAFLREHLESAYHPCGTCKMGAKDDPMAVVDPETRVIGVDGLRVADSSIFPHITYGNLNAPSIMTGEKAADHILGKQPLARSNQEPWINPRWAVSDR</sequence>
<accession>A6U6Y8</accession>
<keyword id="KW-0274">FAD</keyword>
<keyword id="KW-0285">Flavoprotein</keyword>
<keyword id="KW-0520">NAD</keyword>
<keyword id="KW-0560">Oxidoreductase</keyword>
<feature type="chain" id="PRO_1000046572" description="Oxygen-dependent choline dehydrogenase">
    <location>
        <begin position="1"/>
        <end position="549"/>
    </location>
</feature>
<feature type="active site" description="Proton acceptor" evidence="1">
    <location>
        <position position="465"/>
    </location>
</feature>
<feature type="binding site" evidence="1">
    <location>
        <begin position="4"/>
        <end position="33"/>
    </location>
    <ligand>
        <name>FAD</name>
        <dbReference type="ChEBI" id="CHEBI:57692"/>
    </ligand>
</feature>
<protein>
    <recommendedName>
        <fullName evidence="1">Oxygen-dependent choline dehydrogenase</fullName>
        <shortName evidence="1">CDH</shortName>
        <shortName evidence="1">CHD</shortName>
        <ecNumber evidence="1">1.1.99.1</ecNumber>
    </recommendedName>
    <alternativeName>
        <fullName evidence="1">Betaine aldehyde dehydrogenase</fullName>
        <shortName evidence="1">BADH</shortName>
        <ecNumber evidence="1">1.2.1.8</ecNumber>
    </alternativeName>
</protein>
<evidence type="ECO:0000255" key="1">
    <source>
        <dbReference type="HAMAP-Rule" id="MF_00750"/>
    </source>
</evidence>
<dbReference type="EC" id="1.1.99.1" evidence="1"/>
<dbReference type="EC" id="1.2.1.8" evidence="1"/>
<dbReference type="EMBL" id="CP000738">
    <property type="protein sequence ID" value="ABR59418.1"/>
    <property type="molecule type" value="Genomic_DNA"/>
</dbReference>
<dbReference type="RefSeq" id="WP_011974764.1">
    <property type="nucleotide sequence ID" value="NC_009636.1"/>
</dbReference>
<dbReference type="RefSeq" id="YP_001326253.1">
    <property type="nucleotide sequence ID" value="NC_009636.1"/>
</dbReference>
<dbReference type="SMR" id="A6U6Y8"/>
<dbReference type="STRING" id="366394.Smed_0562"/>
<dbReference type="GeneID" id="61609838"/>
<dbReference type="KEGG" id="smd:Smed_0562"/>
<dbReference type="PATRIC" id="fig|366394.8.peg.3654"/>
<dbReference type="eggNOG" id="COG2303">
    <property type="taxonomic scope" value="Bacteria"/>
</dbReference>
<dbReference type="HOGENOM" id="CLU_002865_7_1_5"/>
<dbReference type="OrthoDB" id="9785276at2"/>
<dbReference type="UniPathway" id="UPA00529">
    <property type="reaction ID" value="UER00385"/>
</dbReference>
<dbReference type="Proteomes" id="UP000001108">
    <property type="component" value="Chromosome"/>
</dbReference>
<dbReference type="GO" id="GO:0008802">
    <property type="term" value="F:betaine-aldehyde dehydrogenase (NAD+) activity"/>
    <property type="evidence" value="ECO:0007669"/>
    <property type="project" value="UniProtKB-EC"/>
</dbReference>
<dbReference type="GO" id="GO:0008812">
    <property type="term" value="F:choline dehydrogenase activity"/>
    <property type="evidence" value="ECO:0007669"/>
    <property type="project" value="UniProtKB-UniRule"/>
</dbReference>
<dbReference type="GO" id="GO:0050660">
    <property type="term" value="F:flavin adenine dinucleotide binding"/>
    <property type="evidence" value="ECO:0007669"/>
    <property type="project" value="InterPro"/>
</dbReference>
<dbReference type="GO" id="GO:0019285">
    <property type="term" value="P:glycine betaine biosynthetic process from choline"/>
    <property type="evidence" value="ECO:0007669"/>
    <property type="project" value="UniProtKB-UniRule"/>
</dbReference>
<dbReference type="Gene3D" id="3.50.50.60">
    <property type="entry name" value="FAD/NAD(P)-binding domain"/>
    <property type="match status" value="1"/>
</dbReference>
<dbReference type="Gene3D" id="3.30.560.10">
    <property type="entry name" value="Glucose Oxidase, domain 3"/>
    <property type="match status" value="1"/>
</dbReference>
<dbReference type="HAMAP" id="MF_00750">
    <property type="entry name" value="Choline_dehydrogen"/>
    <property type="match status" value="1"/>
</dbReference>
<dbReference type="InterPro" id="IPR011533">
    <property type="entry name" value="BetA"/>
</dbReference>
<dbReference type="InterPro" id="IPR036188">
    <property type="entry name" value="FAD/NAD-bd_sf"/>
</dbReference>
<dbReference type="InterPro" id="IPR012132">
    <property type="entry name" value="GMC_OxRdtase"/>
</dbReference>
<dbReference type="InterPro" id="IPR000172">
    <property type="entry name" value="GMC_OxRdtase_N"/>
</dbReference>
<dbReference type="InterPro" id="IPR007867">
    <property type="entry name" value="GMC_OxRtase_C"/>
</dbReference>
<dbReference type="NCBIfam" id="TIGR01810">
    <property type="entry name" value="betA"/>
    <property type="match status" value="1"/>
</dbReference>
<dbReference type="NCBIfam" id="NF002550">
    <property type="entry name" value="PRK02106.1"/>
    <property type="match status" value="1"/>
</dbReference>
<dbReference type="PANTHER" id="PTHR11552:SF147">
    <property type="entry name" value="CHOLINE DEHYDROGENASE, MITOCHONDRIAL"/>
    <property type="match status" value="1"/>
</dbReference>
<dbReference type="PANTHER" id="PTHR11552">
    <property type="entry name" value="GLUCOSE-METHANOL-CHOLINE GMC OXIDOREDUCTASE"/>
    <property type="match status" value="1"/>
</dbReference>
<dbReference type="Pfam" id="PF05199">
    <property type="entry name" value="GMC_oxred_C"/>
    <property type="match status" value="1"/>
</dbReference>
<dbReference type="Pfam" id="PF00732">
    <property type="entry name" value="GMC_oxred_N"/>
    <property type="match status" value="1"/>
</dbReference>
<dbReference type="PIRSF" id="PIRSF000137">
    <property type="entry name" value="Alcohol_oxidase"/>
    <property type="match status" value="1"/>
</dbReference>
<dbReference type="SUPFAM" id="SSF54373">
    <property type="entry name" value="FAD-linked reductases, C-terminal domain"/>
    <property type="match status" value="1"/>
</dbReference>
<dbReference type="SUPFAM" id="SSF51905">
    <property type="entry name" value="FAD/NAD(P)-binding domain"/>
    <property type="match status" value="1"/>
</dbReference>
<dbReference type="PROSITE" id="PS00623">
    <property type="entry name" value="GMC_OXRED_1"/>
    <property type="match status" value="1"/>
</dbReference>
<dbReference type="PROSITE" id="PS00624">
    <property type="entry name" value="GMC_OXRED_2"/>
    <property type="match status" value="1"/>
</dbReference>
<reference key="1">
    <citation type="submission" date="2007-06" db="EMBL/GenBank/DDBJ databases">
        <title>Complete sequence of Sinorhizobium medicae WSM419 chromosome.</title>
        <authorList>
            <consortium name="US DOE Joint Genome Institute"/>
            <person name="Copeland A."/>
            <person name="Lucas S."/>
            <person name="Lapidus A."/>
            <person name="Barry K."/>
            <person name="Glavina del Rio T."/>
            <person name="Dalin E."/>
            <person name="Tice H."/>
            <person name="Pitluck S."/>
            <person name="Chain P."/>
            <person name="Malfatti S."/>
            <person name="Shin M."/>
            <person name="Vergez L."/>
            <person name="Schmutz J."/>
            <person name="Larimer F."/>
            <person name="Land M."/>
            <person name="Hauser L."/>
            <person name="Kyrpides N."/>
            <person name="Mikhailova N."/>
            <person name="Reeve W.G."/>
            <person name="Richardson P."/>
        </authorList>
    </citation>
    <scope>NUCLEOTIDE SEQUENCE [LARGE SCALE GENOMIC DNA]</scope>
    <source>
        <strain>WSM419</strain>
    </source>
</reference>
<comment type="function">
    <text evidence="1">Involved in the biosynthesis of the osmoprotectant glycine betaine. Catalyzes the oxidation of choline to betaine aldehyde and betaine aldehyde to glycine betaine at the same rate.</text>
</comment>
<comment type="catalytic activity">
    <reaction evidence="1">
        <text>choline + A = betaine aldehyde + AH2</text>
        <dbReference type="Rhea" id="RHEA:17433"/>
        <dbReference type="ChEBI" id="CHEBI:13193"/>
        <dbReference type="ChEBI" id="CHEBI:15354"/>
        <dbReference type="ChEBI" id="CHEBI:15710"/>
        <dbReference type="ChEBI" id="CHEBI:17499"/>
        <dbReference type="EC" id="1.1.99.1"/>
    </reaction>
</comment>
<comment type="catalytic activity">
    <reaction evidence="1">
        <text>betaine aldehyde + NAD(+) + H2O = glycine betaine + NADH + 2 H(+)</text>
        <dbReference type="Rhea" id="RHEA:15305"/>
        <dbReference type="ChEBI" id="CHEBI:15377"/>
        <dbReference type="ChEBI" id="CHEBI:15378"/>
        <dbReference type="ChEBI" id="CHEBI:15710"/>
        <dbReference type="ChEBI" id="CHEBI:17750"/>
        <dbReference type="ChEBI" id="CHEBI:57540"/>
        <dbReference type="ChEBI" id="CHEBI:57945"/>
        <dbReference type="EC" id="1.2.1.8"/>
    </reaction>
</comment>
<comment type="cofactor">
    <cofactor evidence="1">
        <name>FAD</name>
        <dbReference type="ChEBI" id="CHEBI:57692"/>
    </cofactor>
</comment>
<comment type="pathway">
    <text evidence="1">Amine and polyamine biosynthesis; betaine biosynthesis via choline pathway; betaine aldehyde from choline (cytochrome c reductase route): step 1/1.</text>
</comment>
<comment type="similarity">
    <text evidence="1">Belongs to the GMC oxidoreductase family.</text>
</comment>
<organism>
    <name type="scientific">Sinorhizobium medicae (strain WSM419)</name>
    <name type="common">Ensifer medicae</name>
    <dbReference type="NCBI Taxonomy" id="366394"/>
    <lineage>
        <taxon>Bacteria</taxon>
        <taxon>Pseudomonadati</taxon>
        <taxon>Pseudomonadota</taxon>
        <taxon>Alphaproteobacteria</taxon>
        <taxon>Hyphomicrobiales</taxon>
        <taxon>Rhizobiaceae</taxon>
        <taxon>Sinorhizobium/Ensifer group</taxon>
        <taxon>Sinorhizobium</taxon>
    </lineage>
</organism>
<name>BETA_SINMW</name>
<proteinExistence type="inferred from homology"/>